<organism>
    <name type="scientific">Mus musculus</name>
    <name type="common">Mouse</name>
    <dbReference type="NCBI Taxonomy" id="10090"/>
    <lineage>
        <taxon>Eukaryota</taxon>
        <taxon>Metazoa</taxon>
        <taxon>Chordata</taxon>
        <taxon>Craniata</taxon>
        <taxon>Vertebrata</taxon>
        <taxon>Euteleostomi</taxon>
        <taxon>Mammalia</taxon>
        <taxon>Eutheria</taxon>
        <taxon>Euarchontoglires</taxon>
        <taxon>Glires</taxon>
        <taxon>Rodentia</taxon>
        <taxon>Myomorpha</taxon>
        <taxon>Muroidea</taxon>
        <taxon>Muridae</taxon>
        <taxon>Murinae</taxon>
        <taxon>Mus</taxon>
        <taxon>Mus</taxon>
    </lineage>
</organism>
<name>VAMP2_MOUSE</name>
<reference key="1">
    <citation type="journal article" date="1998" name="J. Biol. Chem.">
        <title>Vesicle-associated membrane protein 2 plays a specific role in the insulin-dependent trafficking of the facilitative glucose transporter GLUT4 in 3T3-L1 adipocytes.</title>
        <authorList>
            <person name="Martin L.B."/>
            <person name="Shewan A."/>
            <person name="Millar C.A."/>
            <person name="Gould G.W."/>
            <person name="James D.E."/>
        </authorList>
    </citation>
    <scope>NUCLEOTIDE SEQUENCE [MRNA]</scope>
    <scope>FUNCTION</scope>
</reference>
<reference key="2">
    <citation type="journal article" date="2005" name="Science">
        <title>The transcriptional landscape of the mammalian genome.</title>
        <authorList>
            <person name="Carninci P."/>
            <person name="Kasukawa T."/>
            <person name="Katayama S."/>
            <person name="Gough J."/>
            <person name="Frith M.C."/>
            <person name="Maeda N."/>
            <person name="Oyama R."/>
            <person name="Ravasi T."/>
            <person name="Lenhard B."/>
            <person name="Wells C."/>
            <person name="Kodzius R."/>
            <person name="Shimokawa K."/>
            <person name="Bajic V.B."/>
            <person name="Brenner S.E."/>
            <person name="Batalov S."/>
            <person name="Forrest A.R."/>
            <person name="Zavolan M."/>
            <person name="Davis M.J."/>
            <person name="Wilming L.G."/>
            <person name="Aidinis V."/>
            <person name="Allen J.E."/>
            <person name="Ambesi-Impiombato A."/>
            <person name="Apweiler R."/>
            <person name="Aturaliya R.N."/>
            <person name="Bailey T.L."/>
            <person name="Bansal M."/>
            <person name="Baxter L."/>
            <person name="Beisel K.W."/>
            <person name="Bersano T."/>
            <person name="Bono H."/>
            <person name="Chalk A.M."/>
            <person name="Chiu K.P."/>
            <person name="Choudhary V."/>
            <person name="Christoffels A."/>
            <person name="Clutterbuck D.R."/>
            <person name="Crowe M.L."/>
            <person name="Dalla E."/>
            <person name="Dalrymple B.P."/>
            <person name="de Bono B."/>
            <person name="Della Gatta G."/>
            <person name="di Bernardo D."/>
            <person name="Down T."/>
            <person name="Engstrom P."/>
            <person name="Fagiolini M."/>
            <person name="Faulkner G."/>
            <person name="Fletcher C.F."/>
            <person name="Fukushima T."/>
            <person name="Furuno M."/>
            <person name="Futaki S."/>
            <person name="Gariboldi M."/>
            <person name="Georgii-Hemming P."/>
            <person name="Gingeras T.R."/>
            <person name="Gojobori T."/>
            <person name="Green R.E."/>
            <person name="Gustincich S."/>
            <person name="Harbers M."/>
            <person name="Hayashi Y."/>
            <person name="Hensch T.K."/>
            <person name="Hirokawa N."/>
            <person name="Hill D."/>
            <person name="Huminiecki L."/>
            <person name="Iacono M."/>
            <person name="Ikeo K."/>
            <person name="Iwama A."/>
            <person name="Ishikawa T."/>
            <person name="Jakt M."/>
            <person name="Kanapin A."/>
            <person name="Katoh M."/>
            <person name="Kawasawa Y."/>
            <person name="Kelso J."/>
            <person name="Kitamura H."/>
            <person name="Kitano H."/>
            <person name="Kollias G."/>
            <person name="Krishnan S.P."/>
            <person name="Kruger A."/>
            <person name="Kummerfeld S.K."/>
            <person name="Kurochkin I.V."/>
            <person name="Lareau L.F."/>
            <person name="Lazarevic D."/>
            <person name="Lipovich L."/>
            <person name="Liu J."/>
            <person name="Liuni S."/>
            <person name="McWilliam S."/>
            <person name="Madan Babu M."/>
            <person name="Madera M."/>
            <person name="Marchionni L."/>
            <person name="Matsuda H."/>
            <person name="Matsuzawa S."/>
            <person name="Miki H."/>
            <person name="Mignone F."/>
            <person name="Miyake S."/>
            <person name="Morris K."/>
            <person name="Mottagui-Tabar S."/>
            <person name="Mulder N."/>
            <person name="Nakano N."/>
            <person name="Nakauchi H."/>
            <person name="Ng P."/>
            <person name="Nilsson R."/>
            <person name="Nishiguchi S."/>
            <person name="Nishikawa S."/>
            <person name="Nori F."/>
            <person name="Ohara O."/>
            <person name="Okazaki Y."/>
            <person name="Orlando V."/>
            <person name="Pang K.C."/>
            <person name="Pavan W.J."/>
            <person name="Pavesi G."/>
            <person name="Pesole G."/>
            <person name="Petrovsky N."/>
            <person name="Piazza S."/>
            <person name="Reed J."/>
            <person name="Reid J.F."/>
            <person name="Ring B.Z."/>
            <person name="Ringwald M."/>
            <person name="Rost B."/>
            <person name="Ruan Y."/>
            <person name="Salzberg S.L."/>
            <person name="Sandelin A."/>
            <person name="Schneider C."/>
            <person name="Schoenbach C."/>
            <person name="Sekiguchi K."/>
            <person name="Semple C.A."/>
            <person name="Seno S."/>
            <person name="Sessa L."/>
            <person name="Sheng Y."/>
            <person name="Shibata Y."/>
            <person name="Shimada H."/>
            <person name="Shimada K."/>
            <person name="Silva D."/>
            <person name="Sinclair B."/>
            <person name="Sperling S."/>
            <person name="Stupka E."/>
            <person name="Sugiura K."/>
            <person name="Sultana R."/>
            <person name="Takenaka Y."/>
            <person name="Taki K."/>
            <person name="Tammoja K."/>
            <person name="Tan S.L."/>
            <person name="Tang S."/>
            <person name="Taylor M.S."/>
            <person name="Tegner J."/>
            <person name="Teichmann S.A."/>
            <person name="Ueda H.R."/>
            <person name="van Nimwegen E."/>
            <person name="Verardo R."/>
            <person name="Wei C.L."/>
            <person name="Yagi K."/>
            <person name="Yamanishi H."/>
            <person name="Zabarovsky E."/>
            <person name="Zhu S."/>
            <person name="Zimmer A."/>
            <person name="Hide W."/>
            <person name="Bult C."/>
            <person name="Grimmond S.M."/>
            <person name="Teasdale R.D."/>
            <person name="Liu E.T."/>
            <person name="Brusic V."/>
            <person name="Quackenbush J."/>
            <person name="Wahlestedt C."/>
            <person name="Mattick J.S."/>
            <person name="Hume D.A."/>
            <person name="Kai C."/>
            <person name="Sasaki D."/>
            <person name="Tomaru Y."/>
            <person name="Fukuda S."/>
            <person name="Kanamori-Katayama M."/>
            <person name="Suzuki M."/>
            <person name="Aoki J."/>
            <person name="Arakawa T."/>
            <person name="Iida J."/>
            <person name="Imamura K."/>
            <person name="Itoh M."/>
            <person name="Kato T."/>
            <person name="Kawaji H."/>
            <person name="Kawagashira N."/>
            <person name="Kawashima T."/>
            <person name="Kojima M."/>
            <person name="Kondo S."/>
            <person name="Konno H."/>
            <person name="Nakano K."/>
            <person name="Ninomiya N."/>
            <person name="Nishio T."/>
            <person name="Okada M."/>
            <person name="Plessy C."/>
            <person name="Shibata K."/>
            <person name="Shiraki T."/>
            <person name="Suzuki S."/>
            <person name="Tagami M."/>
            <person name="Waki K."/>
            <person name="Watahiki A."/>
            <person name="Okamura-Oho Y."/>
            <person name="Suzuki H."/>
            <person name="Kawai J."/>
            <person name="Hayashizaki Y."/>
        </authorList>
    </citation>
    <scope>NUCLEOTIDE SEQUENCE [LARGE SCALE MRNA]</scope>
    <source>
        <strain>C57BL/6J</strain>
        <tissue>Brain</tissue>
    </source>
</reference>
<reference key="3">
    <citation type="journal article" date="2004" name="Genome Res.">
        <title>The status, quality, and expansion of the NIH full-length cDNA project: the Mammalian Gene Collection (MGC).</title>
        <authorList>
            <consortium name="The MGC Project Team"/>
        </authorList>
    </citation>
    <scope>NUCLEOTIDE SEQUENCE [LARGE SCALE MRNA]</scope>
    <source>
        <tissue>Brain</tissue>
    </source>
</reference>
<reference key="4">
    <citation type="submission" date="2007-04" db="UniProtKB">
        <authorList>
            <person name="Lubec G."/>
            <person name="Kang S.U."/>
        </authorList>
    </citation>
    <scope>PROTEIN SEQUENCE OF 31-47 AND 60-83</scope>
    <scope>IDENTIFICATION BY MASS SPECTROMETRY</scope>
    <source>
        <strain>C57BL/6J</strain>
        <tissue>Brain</tissue>
    </source>
</reference>
<reference key="5">
    <citation type="journal article" date="1999" name="J. Cell Sci.">
        <title>Functional characterisation of tetanus and botulinum neurotoxins binding domains.</title>
        <authorList>
            <person name="Lalli G."/>
            <person name="Herreros J."/>
            <person name="Osborne S.L."/>
            <person name="Montecucco C."/>
            <person name="Rossetto O."/>
            <person name="Schiavo G."/>
        </authorList>
    </citation>
    <scope>SUBCELLULAR LOCATION</scope>
    <scope>PROTEOLYTIC CLEAVAGE (MICROBIAL INFECTION) BY C.BOTULINUM NEUROTOXIN TYPE B AND BY C.TETANI TETANUS TOXIN</scope>
</reference>
<reference key="6">
    <citation type="journal article" date="2004" name="Nat. Cell Biol.">
        <title>Synaptobrevin is essential for fast synaptic-vesicle endocytosis.</title>
        <authorList>
            <person name="Deak F."/>
            <person name="Schoch S."/>
            <person name="Liu X."/>
            <person name="Suedhof T.C."/>
            <person name="Kavalali E.T."/>
        </authorList>
    </citation>
    <scope>FUNCTION</scope>
</reference>
<reference key="7">
    <citation type="journal article" date="2007" name="FEBS J.">
        <title>WD-repeat-propeller-FYVE protein, ProF, binds VAMP2 and protein kinase Czeta.</title>
        <authorList>
            <person name="Fritzius T."/>
            <person name="Frey A.D."/>
            <person name="Schweneker M."/>
            <person name="Mayer D."/>
            <person name="Moelling K."/>
        </authorList>
    </citation>
    <scope>INTERACTION WITH WDFY2; PRKCZ AND PRKCI</scope>
    <scope>COMPLEX FORMATION WITH WDFY2 AND PRKCZ</scope>
</reference>
<reference key="8">
    <citation type="journal article" date="2007" name="J. Biol. Chem.">
        <title>Doc2beta is a novel Munc18c-interacting partner and positive effector of syntaxin 4-mediated exocytosis.</title>
        <authorList>
            <person name="Ke B."/>
            <person name="Oh E."/>
            <person name="Thurmond D.C."/>
        </authorList>
    </citation>
    <scope>INTERACTION WITH STX4</scope>
</reference>
<reference key="9">
    <citation type="journal article" date="2009" name="J. Neurochem.">
        <title>Sept8 controls the binding of vesicle-associated membrane protein 2 to synaptophysin.</title>
        <authorList>
            <person name="Ito H."/>
            <person name="Atsuzawa K."/>
            <person name="Morishita R."/>
            <person name="Usuda N."/>
            <person name="Sudo K."/>
            <person name="Iwamoto I."/>
            <person name="Mizutani K."/>
            <person name="Katoh-Semba R."/>
            <person name="Nozawa Y."/>
            <person name="Asano T."/>
            <person name="Nagata K."/>
        </authorList>
    </citation>
    <scope>INTERACTION WITH SEPT8; SYP; SNAP25 AND STX1A</scope>
</reference>
<reference key="10">
    <citation type="journal article" date="2010" name="Cell">
        <title>A tissue-specific atlas of mouse protein phosphorylation and expression.</title>
        <authorList>
            <person name="Huttlin E.L."/>
            <person name="Jedrychowski M.P."/>
            <person name="Elias J.E."/>
            <person name="Goswami T."/>
            <person name="Rad R."/>
            <person name="Beausoleil S.A."/>
            <person name="Villen J."/>
            <person name="Haas W."/>
            <person name="Sowa M.E."/>
            <person name="Gygi S.P."/>
        </authorList>
    </citation>
    <scope>IDENTIFICATION BY MASS SPECTROMETRY [LARGE SCALE ANALYSIS]</scope>
    <source>
        <tissue>Brain</tissue>
        <tissue>Brown adipose tissue</tissue>
        <tissue>Heart</tissue>
        <tissue>Kidney</tissue>
        <tissue>Liver</tissue>
        <tissue>Lung</tissue>
        <tissue>Testis</tissue>
    </source>
</reference>
<reference key="11">
    <citation type="journal article" date="2010" name="EMBO J.">
        <title>Identification of a novel Bves function: regulation of vesicular transport.</title>
        <authorList>
            <person name="Hager H.A."/>
            <person name="Roberts R.J."/>
            <person name="Cross E.E."/>
            <person name="Proux-Gillardeaux V."/>
            <person name="Bader D.M."/>
        </authorList>
    </citation>
    <scope>INTERACTION WITH POPDC1</scope>
</reference>
<reference key="12">
    <citation type="journal article" date="2010" name="Science">
        <title>Alpha-synuclein promotes SNARE-complex assembly in vivo and in vitro.</title>
        <authorList>
            <person name="Burre J."/>
            <person name="Sharma M."/>
            <person name="Tsetsenis T."/>
            <person name="Buchman V."/>
            <person name="Etherton M.R."/>
            <person name="Suedhof T.C."/>
        </authorList>
    </citation>
    <scope>INTERACTION WITH ALPHA-SYNUCLEIN/SNCA</scope>
</reference>
<reference key="13">
    <citation type="journal article" date="2015" name="PLoS ONE">
        <title>SNAREs Interact with Retinal Degeneration Slow and Rod Outer Segment Membrane Protein-1 during Conventional and Unconventional Outer Segment Targeting.</title>
        <authorList>
            <person name="Zulliger R."/>
            <person name="Conley S.M."/>
            <person name="Mwoyosvi M.L."/>
            <person name="Stuck M.W."/>
            <person name="Azadi S."/>
            <person name="Naash M.I."/>
        </authorList>
    </citation>
    <scope>INTERACTION WITH STX3</scope>
    <scope>TISSUE SPECIFICITY</scope>
</reference>
<reference key="14">
    <citation type="journal article" date="2017" name="J. Neurosci.">
        <title>UNC-18 and Tomosyn Antagonistically Control Synaptic Vesicle Priming Downstream of UNC-13 in Caenorhabditis elegans.</title>
        <authorList>
            <person name="Park S."/>
            <person name="Bin N.R."/>
            <person name="Yu B."/>
            <person name="Wong R."/>
            <person name="Sitarska E."/>
            <person name="Sugita K."/>
            <person name="Ma K."/>
            <person name="Xu J."/>
            <person name="Tien C.W."/>
            <person name="Algouneh A."/>
            <person name="Turlova E."/>
            <person name="Wang S."/>
            <person name="Siriya P."/>
            <person name="Shahid W."/>
            <person name="Kalia L."/>
            <person name="Feng Z.P."/>
            <person name="Monnier P.P."/>
            <person name="Sun H.S."/>
            <person name="Zhen M."/>
            <person name="Gao S."/>
            <person name="Rizo J."/>
            <person name="Sugita S."/>
        </authorList>
    </citation>
    <scope>IDENTIFICATION IN SNARE COMPLEX</scope>
</reference>
<gene>
    <name type="primary">Vamp2</name>
    <name type="synonym">Syb2</name>
</gene>
<sequence length="116" mass="12691">MSATAATVPPAAPAGEGGPPAPPPNLTSNRRLQQTQAQVDEVVDIMRVNVDKVLERDQKLSELDDRADALQAGASQFETSAAKLKRKYWWKNLKMMIILGVICAIILIIIIVYFST</sequence>
<proteinExistence type="evidence at protein level"/>
<protein>
    <recommendedName>
        <fullName>Vesicle-associated membrane protein 2</fullName>
        <shortName>VAMP-2</shortName>
    </recommendedName>
    <alternativeName>
        <fullName>Synaptobrevin-2</fullName>
    </alternativeName>
</protein>
<dbReference type="EMBL" id="U60150">
    <property type="protein sequence ID" value="AAB03463.1"/>
    <property type="molecule type" value="mRNA"/>
</dbReference>
<dbReference type="EMBL" id="AK090178">
    <property type="protein sequence ID" value="BAC41125.1"/>
    <property type="molecule type" value="mRNA"/>
</dbReference>
<dbReference type="EMBL" id="BC055105">
    <property type="protein sequence ID" value="AAH55105.1"/>
    <property type="molecule type" value="mRNA"/>
</dbReference>
<dbReference type="CCDS" id="CCDS24881.1"/>
<dbReference type="RefSeq" id="NP_033523.1">
    <property type="nucleotide sequence ID" value="NM_009497.4"/>
</dbReference>
<dbReference type="BMRB" id="P63044"/>
<dbReference type="SMR" id="P63044"/>
<dbReference type="BioGRID" id="204495">
    <property type="interactions" value="60"/>
</dbReference>
<dbReference type="CORUM" id="P63044"/>
<dbReference type="DIP" id="DIP-29065N"/>
<dbReference type="FunCoup" id="P63044">
    <property type="interactions" value="1558"/>
</dbReference>
<dbReference type="IntAct" id="P63044">
    <property type="interactions" value="40"/>
</dbReference>
<dbReference type="MINT" id="P63044"/>
<dbReference type="STRING" id="10090.ENSMUSP00000021273"/>
<dbReference type="TCDB" id="1.F.1.1.4">
    <property type="family name" value="the synaptosomal vesicle fusion pore (svf-pore) family"/>
</dbReference>
<dbReference type="GlyGen" id="P63044">
    <property type="glycosylation" value="3 sites, 1 N-linked glycan (1 site), 1 O-linked glycan (2 sites)"/>
</dbReference>
<dbReference type="iPTMnet" id="P63044"/>
<dbReference type="PhosphoSitePlus" id="P63044"/>
<dbReference type="SwissPalm" id="P63044"/>
<dbReference type="jPOST" id="P63044"/>
<dbReference type="PaxDb" id="10090-ENSMUSP00000021273"/>
<dbReference type="ProteomicsDB" id="300211"/>
<dbReference type="Pumba" id="P63044"/>
<dbReference type="DNASU" id="22318"/>
<dbReference type="Ensembl" id="ENSMUST00000021273.13">
    <property type="protein sequence ID" value="ENSMUSP00000021273.7"/>
    <property type="gene ID" value="ENSMUSG00000020894.18"/>
</dbReference>
<dbReference type="GeneID" id="22318"/>
<dbReference type="KEGG" id="mmu:22318"/>
<dbReference type="UCSC" id="uc007jpe.1">
    <property type="organism name" value="mouse"/>
</dbReference>
<dbReference type="AGR" id="MGI:1313277"/>
<dbReference type="CTD" id="6844"/>
<dbReference type="MGI" id="MGI:1313277">
    <property type="gene designation" value="Vamp2"/>
</dbReference>
<dbReference type="VEuPathDB" id="HostDB:ENSMUSG00000020894"/>
<dbReference type="eggNOG" id="KOG0860">
    <property type="taxonomic scope" value="Eukaryota"/>
</dbReference>
<dbReference type="GeneTree" id="ENSGT00940000158370"/>
<dbReference type="HOGENOM" id="CLU_064620_4_0_1"/>
<dbReference type="InParanoid" id="P63044"/>
<dbReference type="OMA" id="TEQFHRS"/>
<dbReference type="OrthoDB" id="87320at9989"/>
<dbReference type="PhylomeDB" id="P63044"/>
<dbReference type="TreeFam" id="TF313666"/>
<dbReference type="Reactome" id="R-MMU-181429">
    <property type="pathway name" value="Serotonin Neurotransmitter Release Cycle"/>
</dbReference>
<dbReference type="Reactome" id="R-MMU-181430">
    <property type="pathway name" value="Norepinephrine Neurotransmitter Release Cycle"/>
</dbReference>
<dbReference type="Reactome" id="R-MMU-199992">
    <property type="pathway name" value="trans-Golgi Network Vesicle Budding"/>
</dbReference>
<dbReference type="Reactome" id="R-MMU-210500">
    <property type="pathway name" value="Glutamate Neurotransmitter Release Cycle"/>
</dbReference>
<dbReference type="Reactome" id="R-MMU-212676">
    <property type="pathway name" value="Dopamine Neurotransmitter Release Cycle"/>
</dbReference>
<dbReference type="Reactome" id="R-MMU-264642">
    <property type="pathway name" value="Acetylcholine Neurotransmitter Release Cycle"/>
</dbReference>
<dbReference type="Reactome" id="R-MMU-432720">
    <property type="pathway name" value="Lysosome Vesicle Biogenesis"/>
</dbReference>
<dbReference type="Reactome" id="R-MMU-432722">
    <property type="pathway name" value="Golgi Associated Vesicle Biogenesis"/>
</dbReference>
<dbReference type="Reactome" id="R-MMU-449836">
    <property type="pathway name" value="Other interleukin signaling"/>
</dbReference>
<dbReference type="Reactome" id="R-MMU-8856825">
    <property type="pathway name" value="Cargo recognition for clathrin-mediated endocytosis"/>
</dbReference>
<dbReference type="Reactome" id="R-MMU-8856828">
    <property type="pathway name" value="Clathrin-mediated endocytosis"/>
</dbReference>
<dbReference type="Reactome" id="R-MMU-888590">
    <property type="pathway name" value="GABA synthesis, release, reuptake and degradation"/>
</dbReference>
<dbReference type="Reactome" id="R-MMU-9609523">
    <property type="pathway name" value="Insertion of tail-anchored proteins into the endoplasmic reticulum membrane"/>
</dbReference>
<dbReference type="BioGRID-ORCS" id="22318">
    <property type="hits" value="1 hit in 78 CRISPR screens"/>
</dbReference>
<dbReference type="CD-CODE" id="CE726F99">
    <property type="entry name" value="Postsynaptic density"/>
</dbReference>
<dbReference type="ChiTaRS" id="Vamp2">
    <property type="organism name" value="mouse"/>
</dbReference>
<dbReference type="PRO" id="PR:P63044"/>
<dbReference type="Proteomes" id="UP000000589">
    <property type="component" value="Chromosome 11"/>
</dbReference>
<dbReference type="RNAct" id="P63044">
    <property type="molecule type" value="protein"/>
</dbReference>
<dbReference type="Bgee" id="ENSMUSG00000020894">
    <property type="expression patterns" value="Expressed in perirhinal cortex and 258 other cell types or tissues"/>
</dbReference>
<dbReference type="ExpressionAtlas" id="P63044">
    <property type="expression patterns" value="baseline and differential"/>
</dbReference>
<dbReference type="GO" id="GO:0030136">
    <property type="term" value="C:clathrin-coated vesicle"/>
    <property type="evidence" value="ECO:0000250"/>
    <property type="project" value="ParkinsonsUK-UCL"/>
</dbReference>
<dbReference type="GO" id="GO:0060203">
    <property type="term" value="C:clathrin-sculpted glutamate transport vesicle membrane"/>
    <property type="evidence" value="ECO:0000304"/>
    <property type="project" value="Reactome"/>
</dbReference>
<dbReference type="GO" id="GO:0005737">
    <property type="term" value="C:cytoplasm"/>
    <property type="evidence" value="ECO:0000314"/>
    <property type="project" value="UniProtKB"/>
</dbReference>
<dbReference type="GO" id="GO:0031410">
    <property type="term" value="C:cytoplasmic vesicle"/>
    <property type="evidence" value="ECO:0000314"/>
    <property type="project" value="MGI"/>
</dbReference>
<dbReference type="GO" id="GO:0030659">
    <property type="term" value="C:cytoplasmic vesicle membrane"/>
    <property type="evidence" value="ECO:0000314"/>
    <property type="project" value="MGI"/>
</dbReference>
<dbReference type="GO" id="GO:0098978">
    <property type="term" value="C:glutamatergic synapse"/>
    <property type="evidence" value="ECO:0000314"/>
    <property type="project" value="SynGO"/>
</dbReference>
<dbReference type="GO" id="GO:0016020">
    <property type="term" value="C:membrane"/>
    <property type="evidence" value="ECO:0000250"/>
    <property type="project" value="ParkinsonsUK-UCL"/>
</dbReference>
<dbReference type="GO" id="GO:0048471">
    <property type="term" value="C:perinuclear region of cytoplasm"/>
    <property type="evidence" value="ECO:0000314"/>
    <property type="project" value="UniProtKB"/>
</dbReference>
<dbReference type="GO" id="GO:0005886">
    <property type="term" value="C:plasma membrane"/>
    <property type="evidence" value="ECO:0000314"/>
    <property type="project" value="MGI"/>
</dbReference>
<dbReference type="GO" id="GO:0030141">
    <property type="term" value="C:secretory granule"/>
    <property type="evidence" value="ECO:0000314"/>
    <property type="project" value="UniProtKB"/>
</dbReference>
<dbReference type="GO" id="GO:0030667">
    <property type="term" value="C:secretory granule membrane"/>
    <property type="evidence" value="ECO:0000304"/>
    <property type="project" value="Reactome"/>
</dbReference>
<dbReference type="GO" id="GO:0031201">
    <property type="term" value="C:SNARE complex"/>
    <property type="evidence" value="ECO:0000314"/>
    <property type="project" value="MGI"/>
</dbReference>
<dbReference type="GO" id="GO:0000322">
    <property type="term" value="C:storage vacuole"/>
    <property type="evidence" value="ECO:0000314"/>
    <property type="project" value="MGI"/>
</dbReference>
<dbReference type="GO" id="GO:0045202">
    <property type="term" value="C:synapse"/>
    <property type="evidence" value="ECO:0000314"/>
    <property type="project" value="MGI"/>
</dbReference>
<dbReference type="GO" id="GO:0008021">
    <property type="term" value="C:synaptic vesicle"/>
    <property type="evidence" value="ECO:0000314"/>
    <property type="project" value="MGI"/>
</dbReference>
<dbReference type="GO" id="GO:0030672">
    <property type="term" value="C:synaptic vesicle membrane"/>
    <property type="evidence" value="ECO:0000314"/>
    <property type="project" value="MGI"/>
</dbReference>
<dbReference type="GO" id="GO:0070044">
    <property type="term" value="C:synaptobrevin 2-SNAP-25-syntaxin-1a complex"/>
    <property type="evidence" value="ECO:0000314"/>
    <property type="project" value="MGI"/>
</dbReference>
<dbReference type="GO" id="GO:0070032">
    <property type="term" value="C:synaptobrevin 2-SNAP-25-syntaxin-1a-complexin I complex"/>
    <property type="evidence" value="ECO:0000266"/>
    <property type="project" value="MGI"/>
</dbReference>
<dbReference type="GO" id="GO:0005802">
    <property type="term" value="C:trans-Golgi network"/>
    <property type="evidence" value="ECO:0000314"/>
    <property type="project" value="UniProtKB"/>
</dbReference>
<dbReference type="GO" id="GO:0031982">
    <property type="term" value="C:vesicle"/>
    <property type="evidence" value="ECO:0000314"/>
    <property type="project" value="UniProtKB"/>
</dbReference>
<dbReference type="GO" id="GO:0042589">
    <property type="term" value="C:zymogen granule membrane"/>
    <property type="evidence" value="ECO:0000314"/>
    <property type="project" value="MGI"/>
</dbReference>
<dbReference type="GO" id="GO:0048306">
    <property type="term" value="F:calcium-dependent protein binding"/>
    <property type="evidence" value="ECO:0000250"/>
    <property type="project" value="ParkinsonsUK-UCL"/>
</dbReference>
<dbReference type="GO" id="GO:0005516">
    <property type="term" value="F:calmodulin binding"/>
    <property type="evidence" value="ECO:0000314"/>
    <property type="project" value="MGI"/>
</dbReference>
<dbReference type="GO" id="GO:0005543">
    <property type="term" value="F:phospholipid binding"/>
    <property type="evidence" value="ECO:0000314"/>
    <property type="project" value="MGI"/>
</dbReference>
<dbReference type="GO" id="GO:0000149">
    <property type="term" value="F:SNARE binding"/>
    <property type="evidence" value="ECO:0000314"/>
    <property type="project" value="MGI"/>
</dbReference>
<dbReference type="GO" id="GO:0019905">
    <property type="term" value="F:syntaxin binding"/>
    <property type="evidence" value="ECO:0000353"/>
    <property type="project" value="UniProtKB"/>
</dbReference>
<dbReference type="GO" id="GO:0017075">
    <property type="term" value="F:syntaxin-1 binding"/>
    <property type="evidence" value="ECO:0000314"/>
    <property type="project" value="ParkinsonsUK-UCL"/>
</dbReference>
<dbReference type="GO" id="GO:0017156">
    <property type="term" value="P:calcium-ion regulated exocytosis"/>
    <property type="evidence" value="ECO:0000314"/>
    <property type="project" value="MGI"/>
</dbReference>
<dbReference type="GO" id="GO:0032869">
    <property type="term" value="P:cellular response to insulin stimulus"/>
    <property type="evidence" value="ECO:0000314"/>
    <property type="project" value="MGI"/>
</dbReference>
<dbReference type="GO" id="GO:0051649">
    <property type="term" value="P:establishment of localization in cell"/>
    <property type="evidence" value="ECO:0000315"/>
    <property type="project" value="MGI"/>
</dbReference>
<dbReference type="GO" id="GO:0098967">
    <property type="term" value="P:exocytic insertion of neurotransmitter receptor to postsynaptic membrane"/>
    <property type="evidence" value="ECO:0000314"/>
    <property type="project" value="SynGO"/>
</dbReference>
<dbReference type="GO" id="GO:0043001">
    <property type="term" value="P:Golgi to plasma membrane protein transport"/>
    <property type="evidence" value="ECO:0000315"/>
    <property type="project" value="MGI"/>
</dbReference>
<dbReference type="GO" id="GO:0046879">
    <property type="term" value="P:hormone secretion"/>
    <property type="evidence" value="ECO:0000314"/>
    <property type="project" value="UniProtKB"/>
</dbReference>
<dbReference type="GO" id="GO:0060291">
    <property type="term" value="P:long-term synaptic potentiation"/>
    <property type="evidence" value="ECO:0000315"/>
    <property type="project" value="MGI"/>
</dbReference>
<dbReference type="GO" id="GO:0061025">
    <property type="term" value="P:membrane fusion"/>
    <property type="evidence" value="ECO:0000315"/>
    <property type="project" value="MGI"/>
</dbReference>
<dbReference type="GO" id="GO:0090316">
    <property type="term" value="P:positive regulation of intracellular protein transport"/>
    <property type="evidence" value="ECO:0000315"/>
    <property type="project" value="MGI"/>
</dbReference>
<dbReference type="GO" id="GO:0045055">
    <property type="term" value="P:regulated exocytosis"/>
    <property type="evidence" value="ECO:0000314"/>
    <property type="project" value="UniProtKB"/>
</dbReference>
<dbReference type="GO" id="GO:0017158">
    <property type="term" value="P:regulation of calcium ion-dependent exocytosis"/>
    <property type="evidence" value="ECO:0000304"/>
    <property type="project" value="ParkinsonsUK-UCL"/>
</dbReference>
<dbReference type="GO" id="GO:1902259">
    <property type="term" value="P:regulation of delayed rectifier potassium channel activity"/>
    <property type="evidence" value="ECO:0000250"/>
    <property type="project" value="UniProtKB"/>
</dbReference>
<dbReference type="GO" id="GO:0017157">
    <property type="term" value="P:regulation of exocytosis"/>
    <property type="evidence" value="ECO:0000314"/>
    <property type="project" value="MGI"/>
</dbReference>
<dbReference type="GO" id="GO:0060627">
    <property type="term" value="P:regulation of vesicle-mediated transport"/>
    <property type="evidence" value="ECO:0000315"/>
    <property type="project" value="MGI"/>
</dbReference>
<dbReference type="GO" id="GO:0016081">
    <property type="term" value="P:synaptic vesicle docking"/>
    <property type="evidence" value="ECO:0000314"/>
    <property type="project" value="SynGO"/>
</dbReference>
<dbReference type="GO" id="GO:0048488">
    <property type="term" value="P:synaptic vesicle endocytosis"/>
    <property type="evidence" value="ECO:0000315"/>
    <property type="project" value="UniProtKB"/>
</dbReference>
<dbReference type="GO" id="GO:0016079">
    <property type="term" value="P:synaptic vesicle exocytosis"/>
    <property type="evidence" value="ECO:0000315"/>
    <property type="project" value="UniProtKB"/>
</dbReference>
<dbReference type="GO" id="GO:0006906">
    <property type="term" value="P:vesicle fusion"/>
    <property type="evidence" value="ECO:0000250"/>
    <property type="project" value="UniProtKB"/>
</dbReference>
<dbReference type="GO" id="GO:0099003">
    <property type="term" value="P:vesicle-mediated transport in synapse"/>
    <property type="evidence" value="ECO:0000314"/>
    <property type="project" value="SynGO"/>
</dbReference>
<dbReference type="CDD" id="cd15870">
    <property type="entry name" value="R-SNARE_VAMP2"/>
    <property type="match status" value="1"/>
</dbReference>
<dbReference type="FunFam" id="1.20.5.110:FF:000013">
    <property type="entry name" value="Vesicle-associated membrane protein 2"/>
    <property type="match status" value="1"/>
</dbReference>
<dbReference type="Gene3D" id="1.20.5.110">
    <property type="match status" value="1"/>
</dbReference>
<dbReference type="InterPro" id="IPR001388">
    <property type="entry name" value="Synaptobrevin-like"/>
</dbReference>
<dbReference type="InterPro" id="IPR016444">
    <property type="entry name" value="Synaptobrevin/VAMP"/>
</dbReference>
<dbReference type="InterPro" id="IPR042855">
    <property type="entry name" value="V_SNARE_CC"/>
</dbReference>
<dbReference type="PANTHER" id="PTHR45701">
    <property type="entry name" value="SYNAPTOBREVIN FAMILY MEMBER"/>
    <property type="match status" value="1"/>
</dbReference>
<dbReference type="Pfam" id="PF00957">
    <property type="entry name" value="Synaptobrevin"/>
    <property type="match status" value="1"/>
</dbReference>
<dbReference type="PIRSF" id="PIRSF005409">
    <property type="entry name" value="Synaptobrevin_euk"/>
    <property type="match status" value="1"/>
</dbReference>
<dbReference type="PRINTS" id="PR00219">
    <property type="entry name" value="SYNAPTOBREVN"/>
</dbReference>
<dbReference type="SUPFAM" id="SSF58038">
    <property type="entry name" value="SNARE fusion complex"/>
    <property type="match status" value="1"/>
</dbReference>
<dbReference type="PROSITE" id="PS00417">
    <property type="entry name" value="SYNAPTOBREVIN"/>
    <property type="match status" value="1"/>
</dbReference>
<dbReference type="PROSITE" id="PS50892">
    <property type="entry name" value="V_SNARE"/>
    <property type="match status" value="1"/>
</dbReference>
<accession>P63044</accession>
<accession>Q64357</accession>
<comment type="function">
    <text evidence="3 8 16">Involved in the targeting and/or fusion of transport vesicles to their target membrane (PubMed:9430681). Major SNARE protein of synaptic vesicles which mediates fusion of synaptic vesicles to release neurotransmitters. Essential for fast vesicular exocytosis and activity-dependent neurotransmitter release as well as fast endocytosis that mediates rapid reuse of synaptic vesicles (PubMed:15475946). Modulates the gating characteristics of the delayed rectifier voltage-dependent potassium channel KCNB1 (By similarity).</text>
</comment>
<comment type="subunit">
    <text evidence="3 9 10 11 12 13 14 15">Part of the SNARE core complex containing SNAP25, VAMP2 and STX1A; this complex constitutes the basic catalytic machinery of the complex neurotransmitter release apparatus (PubMed:19196426, PubMed:28821673). Recruited to the SNARE complex following binding of the SNARE complex component STX1A to STXBP1 (PubMed:28821673). This complex binds to CPLX1. Interacts with VAPA and VAPB (By similarity). Interacts (via N-terminus) with KCNB1 (via N-terminus and C-terminus); stimulates the channel inactivation rate of KCNB1 (By similarity). Interacts with POPDC1 and STX4. Interacts with WDFY2, PRKCZ and PRKCI (PubMed:17313651). Forms a complex with WDFY2 and PRKCZ (PubMed:17313651). Interacts with SEPT8; the interaction inhibits interaction of VAMP2 with SYP (PubMed:19196426). Interacts with SYP; the interaction is inhibited by interaction with SEPT8 (PubMed:19196426). Interacts with PICALM (By similarity). Interacts with alpha-synuclein/SNCA. Interacts with STX3 isoform 3B (PubMed:26406599).</text>
</comment>
<comment type="interaction">
    <interactant intactId="EBI-521920">
        <id>P63044</id>
    </interactant>
    <interactant intactId="EBI-81763">
        <id>P60766</id>
        <label>Cdc42</label>
    </interactant>
    <organismsDiffer>false</organismsDiffer>
    <experiments>2</experiments>
</comment>
<comment type="interaction">
    <interactant intactId="EBI-521920">
        <id>P63044</id>
    </interactant>
    <interactant intactId="EBI-445270">
        <id>P60879</id>
        <label>Snap25</label>
    </interactant>
    <organismsDiffer>false</organismsDiffer>
    <experiments>18</experiments>
</comment>
<comment type="subcellular location">
    <subcellularLocation>
        <location evidence="2">Cytoplasmic vesicle</location>
        <location evidence="2">Secretory vesicle</location>
        <location evidence="2">Synaptic vesicle membrane</location>
        <topology evidence="4">Single-pass type IV membrane protein</topology>
    </subcellularLocation>
    <subcellularLocation>
        <location evidence="3">Cell membrane</location>
    </subcellularLocation>
    <text evidence="2">Colocalizes with PRKCZ and WDFY2 in intracellular vesicles.</text>
</comment>
<comment type="tissue specificity">
    <text evidence="14">Expressed in the outer plexiform layer of the retina (at protein level).</text>
</comment>
<comment type="PTM">
    <text evidence="2">Phosphorylated by PRKCZ in vitro and this phosphorylation is increased in the presence of WDFY2.</text>
</comment>
<comment type="PTM">
    <text evidence="7 18">(Microbial infection) Targeted and hydrolyzed by C.botulinum neurotoxin type B (BoNT/B, botB); 20 hours after treatment of spinal cord cells almost all the protein has been digested (PubMed:10413679). BoNT/B hydrolyzes the 76-Gln-|-Phe-77 bond and inhibits neurotransmitter release (Probable).</text>
</comment>
<comment type="PTM">
    <text evidence="7 18">(Microbial infection) Targeted and hydrolyzed by C.tetani toxin (tetX); 20 hours after treatment of spinal cord cells almost all the protein has been digested (PubMed:10413679). Tetanus toxin hydrolyzes the 76-Gln-|-Phe-77 bond and inhibits neurotransmitter release (Probable).</text>
</comment>
<comment type="similarity">
    <text evidence="17">Belongs to the synaptobrevin family.</text>
</comment>
<evidence type="ECO:0000250" key="1">
    <source>
        <dbReference type="UniProtKB" id="P63026"/>
    </source>
</evidence>
<evidence type="ECO:0000250" key="2">
    <source>
        <dbReference type="UniProtKB" id="P63027"/>
    </source>
</evidence>
<evidence type="ECO:0000250" key="3">
    <source>
        <dbReference type="UniProtKB" id="P63045"/>
    </source>
</evidence>
<evidence type="ECO:0000255" key="4"/>
<evidence type="ECO:0000255" key="5">
    <source>
        <dbReference type="PROSITE-ProRule" id="PRU00290"/>
    </source>
</evidence>
<evidence type="ECO:0000256" key="6">
    <source>
        <dbReference type="SAM" id="MobiDB-lite"/>
    </source>
</evidence>
<evidence type="ECO:0000269" key="7">
    <source>
    </source>
</evidence>
<evidence type="ECO:0000269" key="8">
    <source>
    </source>
</evidence>
<evidence type="ECO:0000269" key="9">
    <source>
    </source>
</evidence>
<evidence type="ECO:0000269" key="10">
    <source>
    </source>
</evidence>
<evidence type="ECO:0000269" key="11">
    <source>
    </source>
</evidence>
<evidence type="ECO:0000269" key="12">
    <source>
    </source>
</evidence>
<evidence type="ECO:0000269" key="13">
    <source>
    </source>
</evidence>
<evidence type="ECO:0000269" key="14">
    <source>
    </source>
</evidence>
<evidence type="ECO:0000269" key="15">
    <source>
    </source>
</evidence>
<evidence type="ECO:0000269" key="16">
    <source>
    </source>
</evidence>
<evidence type="ECO:0000305" key="17"/>
<evidence type="ECO:0000305" key="18">
    <source>
    </source>
</evidence>
<feature type="initiator methionine" description="Removed" evidence="1">
    <location>
        <position position="1"/>
    </location>
</feature>
<feature type="chain" id="PRO_0000206725" description="Vesicle-associated membrane protein 2">
    <location>
        <begin position="2"/>
        <end position="116"/>
    </location>
</feature>
<feature type="topological domain" description="Cytoplasmic" evidence="4">
    <location>
        <begin position="2"/>
        <end position="94"/>
    </location>
</feature>
<feature type="transmembrane region" description="Helical; Anchor for type IV membrane protein" evidence="4">
    <location>
        <begin position="95"/>
        <end position="114"/>
    </location>
</feature>
<feature type="topological domain" description="Vesicular" evidence="4">
    <location>
        <begin position="115"/>
        <end position="116"/>
    </location>
</feature>
<feature type="domain" description="v-SNARE coiled-coil homology" evidence="5">
    <location>
        <begin position="31"/>
        <end position="91"/>
    </location>
</feature>
<feature type="region of interest" description="Disordered" evidence="6">
    <location>
        <begin position="1"/>
        <end position="28"/>
    </location>
</feature>
<feature type="region of interest" description="Required for interaction with SEPT8" evidence="3">
    <location>
        <begin position="92"/>
        <end position="116"/>
    </location>
</feature>
<feature type="site" description="(Microbial infection) Cleavage; by C.botulinum neurotoxin type B (BoNT/B, botB)" evidence="18">
    <location>
        <begin position="76"/>
        <end position="77"/>
    </location>
</feature>
<feature type="site" description="(Microbial infection) Cleavage; by C.tetani neurotoxin (tetX)" evidence="18">
    <location>
        <begin position="76"/>
        <end position="77"/>
    </location>
</feature>
<feature type="modified residue" description="N-acetylserine" evidence="1">
    <location>
        <position position="2"/>
    </location>
</feature>
<keyword id="KW-0007">Acetylation</keyword>
<keyword id="KW-1003">Cell membrane</keyword>
<keyword id="KW-0175">Coiled coil</keyword>
<keyword id="KW-0968">Cytoplasmic vesicle</keyword>
<keyword id="KW-0903">Direct protein sequencing</keyword>
<keyword id="KW-0472">Membrane</keyword>
<keyword id="KW-0597">Phosphoprotein</keyword>
<keyword id="KW-1185">Reference proteome</keyword>
<keyword id="KW-0770">Synapse</keyword>
<keyword id="KW-0812">Transmembrane</keyword>
<keyword id="KW-1133">Transmembrane helix</keyword>